<organism>
    <name type="scientific">Bacillus cereus (strain B4264)</name>
    <dbReference type="NCBI Taxonomy" id="405532"/>
    <lineage>
        <taxon>Bacteria</taxon>
        <taxon>Bacillati</taxon>
        <taxon>Bacillota</taxon>
        <taxon>Bacilli</taxon>
        <taxon>Bacillales</taxon>
        <taxon>Bacillaceae</taxon>
        <taxon>Bacillus</taxon>
        <taxon>Bacillus cereus group</taxon>
    </lineage>
</organism>
<proteinExistence type="inferred from homology"/>
<evidence type="ECO:0000255" key="1">
    <source>
        <dbReference type="HAMAP-Rule" id="MF_00506"/>
    </source>
</evidence>
<dbReference type="EMBL" id="CP001176">
    <property type="protein sequence ID" value="ACK59391.1"/>
    <property type="molecule type" value="Genomic_DNA"/>
</dbReference>
<dbReference type="RefSeq" id="WP_000101022.1">
    <property type="nucleotide sequence ID" value="NZ_VEHB01000003.1"/>
</dbReference>
<dbReference type="KEGG" id="bcb:BCB4264_A1446"/>
<dbReference type="HOGENOM" id="CLU_187365_0_0_9"/>
<dbReference type="Proteomes" id="UP000007096">
    <property type="component" value="Chromosome"/>
</dbReference>
<dbReference type="HAMAP" id="MF_00506">
    <property type="entry name" value="UPF0180"/>
    <property type="match status" value="1"/>
</dbReference>
<dbReference type="InterPro" id="IPR005370">
    <property type="entry name" value="UPF0180"/>
</dbReference>
<dbReference type="NCBIfam" id="NF002845">
    <property type="entry name" value="PRK03094.1"/>
    <property type="match status" value="1"/>
</dbReference>
<dbReference type="Pfam" id="PF03698">
    <property type="entry name" value="UPF0180"/>
    <property type="match status" value="1"/>
</dbReference>
<sequence length="79" mass="8364">MARIGVENSLTDVQQALQQQGHEVVTLNSEQDAQGCDCCVVTGQDSNVMGIADTSIKGSVITAHGLTTDEICQQVESRT</sequence>
<reference key="1">
    <citation type="submission" date="2008-10" db="EMBL/GenBank/DDBJ databases">
        <title>Genome sequence of Bacillus cereus B4264.</title>
        <authorList>
            <person name="Dodson R.J."/>
            <person name="Durkin A.S."/>
            <person name="Rosovitz M.J."/>
            <person name="Rasko D.A."/>
            <person name="Hoffmaster A."/>
            <person name="Ravel J."/>
            <person name="Sutton G."/>
        </authorList>
    </citation>
    <scope>NUCLEOTIDE SEQUENCE [LARGE SCALE GENOMIC DNA]</scope>
    <source>
        <strain>B4264</strain>
    </source>
</reference>
<comment type="similarity">
    <text evidence="1">Belongs to the UPF0180 family.</text>
</comment>
<accession>B7HHE8</accession>
<name>Y1446_BACC4</name>
<feature type="chain" id="PRO_1000127036" description="UPF0180 protein BCB4264_A1446">
    <location>
        <begin position="1"/>
        <end position="79"/>
    </location>
</feature>
<protein>
    <recommendedName>
        <fullName evidence="1">UPF0180 protein BCB4264_A1446</fullName>
    </recommendedName>
</protein>
<gene>
    <name type="ordered locus">BCB4264_A1446</name>
</gene>